<keyword id="KW-0167">Capsid protein</keyword>
<keyword id="KW-1185">Reference proteome</keyword>
<keyword id="KW-0946">Virion</keyword>
<organismHost>
    <name type="scientific">Mycobacterium</name>
    <dbReference type="NCBI Taxonomy" id="1763"/>
</organismHost>
<name>VG23_BPMD2</name>
<accession>Q38362</accession>
<accession>O64217</accession>
<dbReference type="EMBL" id="X70353">
    <property type="protein sequence ID" value="CAA49811.1"/>
    <property type="molecule type" value="Genomic_DNA"/>
</dbReference>
<dbReference type="EMBL" id="AF022214">
    <property type="protein sequence ID" value="AAC18464.2"/>
    <property type="molecule type" value="Genomic_DNA"/>
</dbReference>
<dbReference type="PIR" id="E72802">
    <property type="entry name" value="E72802"/>
</dbReference>
<dbReference type="PIR" id="S31937">
    <property type="entry name" value="S31937"/>
</dbReference>
<dbReference type="RefSeq" id="NP_046839.1">
    <property type="nucleotide sequence ID" value="NC_001900.1"/>
</dbReference>
<dbReference type="SMR" id="Q38362"/>
<dbReference type="GeneID" id="1261604"/>
<dbReference type="KEGG" id="vg:1261604"/>
<dbReference type="OrthoDB" id="6201at10239"/>
<dbReference type="Proteomes" id="UP000002131">
    <property type="component" value="Segment"/>
</dbReference>
<dbReference type="GO" id="GO:0019028">
    <property type="term" value="C:viral capsid"/>
    <property type="evidence" value="ECO:0007669"/>
    <property type="project" value="UniProtKB-KW"/>
</dbReference>
<comment type="subcellular location">
    <subcellularLocation>
        <location evidence="2">Virion</location>
    </subcellularLocation>
</comment>
<gene>
    <name type="primary">23</name>
</gene>
<evidence type="ECO:0000250" key="1"/>
<evidence type="ECO:0000305" key="2"/>
<feature type="initiator methionine" description="Removed; by host" evidence="1">
    <location>
        <position position="1"/>
    </location>
</feature>
<feature type="chain" id="PRO_0000164734" description="Major tail protein Gp23">
    <location>
        <begin position="2"/>
        <end position="198"/>
    </location>
</feature>
<organism>
    <name type="scientific">Mycobacterium phage D29</name>
    <name type="common">Mycobacteriophage D29</name>
    <dbReference type="NCBI Taxonomy" id="28369"/>
    <lineage>
        <taxon>Viruses</taxon>
        <taxon>Duplodnaviria</taxon>
        <taxon>Heunggongvirae</taxon>
        <taxon>Uroviricota</taxon>
        <taxon>Caudoviricetes</taxon>
        <taxon>Fromanvirus</taxon>
    </lineage>
</organism>
<proteinExistence type="inferred from homology"/>
<reference key="1">
    <citation type="submission" date="1993-02" db="EMBL/GenBank/DDBJ databases">
        <title>Cloning, sequence and expression of the gene coding for the major coat protein of Mycobacteriophage D29.</title>
        <authorList>
            <person name="Shramm Y."/>
            <person name="Wyse J."/>
            <person name="Mink S."/>
            <person name="Suissa M."/>
            <person name="Kuhn J."/>
        </authorList>
    </citation>
    <scope>NUCLEOTIDE SEQUENCE [GENOMIC DNA]</scope>
</reference>
<reference key="2">
    <citation type="journal article" date="1998" name="J. Mol. Biol.">
        <title>Genome structure of mycobacteriophage D29: implications for phage evolution.</title>
        <authorList>
            <person name="Ford M.E."/>
            <person name="Sarkis G.J."/>
            <person name="Belanger A.E."/>
            <person name="Hendrix R.W."/>
            <person name="Hatfull G.F."/>
        </authorList>
    </citation>
    <scope>NUCLEOTIDE SEQUENCE [LARGE SCALE GENOMIC DNA]</scope>
</reference>
<reference key="3">
    <citation type="submission" date="2021-06" db="EMBL/GenBank/DDBJ databases">
        <authorList>
            <person name="Ford M.E."/>
            <person name="Sarkis G.J."/>
            <person name="Belanger A.E."/>
            <person name="Hendrix R.W."/>
            <person name="Hatfull G.F."/>
        </authorList>
    </citation>
    <scope>SEQUENCE REVISION TO PRO-26 AND GLU-177</scope>
</reference>
<protein>
    <recommendedName>
        <fullName>Major tail protein Gp23</fullName>
    </recommendedName>
    <alternativeName>
        <fullName>Major coat protein</fullName>
    </alternativeName>
</protein>
<sequence length="198" mass="21276">MAENDDAVLTAAVGYVYVAEAGTAAPTPAELKTIDLSDPSTWTGATGWSSVGHTSRGTLPEFGFEGGDSEVKGSWQKKKLREITTEDPIDYVVVLLHQFDEQSLGLYYGPNASTTPGVFGVKTGQTNEKAVLVVIEDGDMRLGHHAHKAGVRRDDAIELPIDDLAALPVRFTYLDHEDELPFSWINEDLFGLSPGGGA</sequence>